<accession>Q47146</accession>
<accession>P71283</accession>
<accession>P75673</accession>
<accession>Q47680</accession>
<proteinExistence type="evidence at transcript level"/>
<feature type="chain" id="PRO_0000201200" description="Acyl-coenzyme A dehydrogenase">
    <location>
        <begin position="1"/>
        <end position="814"/>
    </location>
</feature>
<feature type="active site" description="Proton acceptor" evidence="1">
    <location>
        <position position="497"/>
    </location>
</feature>
<evidence type="ECO:0000250" key="1">
    <source>
        <dbReference type="UniProtKB" id="P15651"/>
    </source>
</evidence>
<evidence type="ECO:0000269" key="2">
    <source>
    </source>
</evidence>
<evidence type="ECO:0000303" key="3">
    <source>
    </source>
</evidence>
<evidence type="ECO:0000305" key="4"/>
<evidence type="ECO:0000305" key="5">
    <source>
    </source>
</evidence>
<keyword id="KW-0274">FAD</keyword>
<keyword id="KW-0276">Fatty acid metabolism</keyword>
<keyword id="KW-0285">Flavoprotein</keyword>
<keyword id="KW-0443">Lipid metabolism</keyword>
<keyword id="KW-0560">Oxidoreductase</keyword>
<keyword id="KW-1185">Reference proteome</keyword>
<protein>
    <recommendedName>
        <fullName evidence="3">Acyl-coenzyme A dehydrogenase</fullName>
        <shortName>ACDH</shortName>
        <shortName evidence="3">Acyl-CoA dehydrogenase</shortName>
        <ecNumber evidence="5">1.3.8.7</ecNumber>
        <ecNumber evidence="5">1.3.8.8</ecNumber>
    </recommendedName>
</protein>
<gene>
    <name evidence="3" type="primary">fadE</name>
    <name type="synonym">yafH</name>
    <name type="ordered locus">b0221</name>
    <name type="ordered locus">JW5020</name>
</gene>
<dbReference type="EC" id="1.3.8.7" evidence="5"/>
<dbReference type="EC" id="1.3.8.8" evidence="5"/>
<dbReference type="EMBL" id="U70214">
    <property type="protein sequence ID" value="AAB08643.1"/>
    <property type="molecule type" value="Genomic_DNA"/>
</dbReference>
<dbReference type="EMBL" id="U00096">
    <property type="protein sequence ID" value="AAC73325.2"/>
    <property type="molecule type" value="Genomic_DNA"/>
</dbReference>
<dbReference type="EMBL" id="AP009048">
    <property type="protein sequence ID" value="BAA77891.2"/>
    <property type="molecule type" value="Genomic_DNA"/>
</dbReference>
<dbReference type="EMBL" id="D38582">
    <property type="protein sequence ID" value="BAA07583.1"/>
    <property type="status" value="ALT_INIT"/>
    <property type="molecule type" value="Genomic_DNA"/>
</dbReference>
<dbReference type="PIR" id="F64746">
    <property type="entry name" value="F64746"/>
</dbReference>
<dbReference type="RefSeq" id="NP_414756.2">
    <property type="nucleotide sequence ID" value="NC_000913.3"/>
</dbReference>
<dbReference type="RefSeq" id="WP_000973083.1">
    <property type="nucleotide sequence ID" value="NZ_SSZK01000029.1"/>
</dbReference>
<dbReference type="SMR" id="Q47146"/>
<dbReference type="BioGRID" id="4259770">
    <property type="interactions" value="210"/>
</dbReference>
<dbReference type="FunCoup" id="Q47146">
    <property type="interactions" value="49"/>
</dbReference>
<dbReference type="STRING" id="511145.b0221"/>
<dbReference type="jPOST" id="Q47146"/>
<dbReference type="PaxDb" id="511145-b0221"/>
<dbReference type="EnsemblBacteria" id="AAC73325">
    <property type="protein sequence ID" value="AAC73325"/>
    <property type="gene ID" value="b0221"/>
</dbReference>
<dbReference type="GeneID" id="949007"/>
<dbReference type="KEGG" id="ecj:JW5020"/>
<dbReference type="KEGG" id="eco:b0221"/>
<dbReference type="KEGG" id="ecoc:C3026_01045"/>
<dbReference type="PATRIC" id="fig|1411691.4.peg.2062"/>
<dbReference type="EchoBASE" id="EB2939"/>
<dbReference type="eggNOG" id="COG1960">
    <property type="taxonomic scope" value="Bacteria"/>
</dbReference>
<dbReference type="HOGENOM" id="CLU_012192_0_0_6"/>
<dbReference type="InParanoid" id="Q47146"/>
<dbReference type="OMA" id="CDLANDW"/>
<dbReference type="OrthoDB" id="9802447at2"/>
<dbReference type="PhylomeDB" id="Q47146"/>
<dbReference type="BioCyc" id="EcoCyc:ACYLCOADEHYDROG-MONOMER"/>
<dbReference type="BioCyc" id="MetaCyc:ACYLCOADEHYDROG-MONOMER"/>
<dbReference type="UniPathway" id="UPA00659"/>
<dbReference type="PRO" id="PR:Q47146"/>
<dbReference type="Proteomes" id="UP000000625">
    <property type="component" value="Chromosome"/>
</dbReference>
<dbReference type="GO" id="GO:0005737">
    <property type="term" value="C:cytoplasm"/>
    <property type="evidence" value="ECO:0000314"/>
    <property type="project" value="EcoCyc"/>
</dbReference>
<dbReference type="GO" id="GO:0003995">
    <property type="term" value="F:acyl-CoA dehydrogenase activity"/>
    <property type="evidence" value="ECO:0000314"/>
    <property type="project" value="EcoCyc"/>
</dbReference>
<dbReference type="GO" id="GO:0050660">
    <property type="term" value="F:flavin adenine dinucleotide binding"/>
    <property type="evidence" value="ECO:0007669"/>
    <property type="project" value="InterPro"/>
</dbReference>
<dbReference type="GO" id="GO:0004466">
    <property type="term" value="F:long-chain fatty acyl-CoA dehydrogenase activity"/>
    <property type="evidence" value="ECO:0007669"/>
    <property type="project" value="UniProtKB-EC"/>
</dbReference>
<dbReference type="GO" id="GO:0070991">
    <property type="term" value="F:medium-chain fatty acyl-CoA dehydrogenase activity"/>
    <property type="evidence" value="ECO:0007669"/>
    <property type="project" value="UniProtKB-EC"/>
</dbReference>
<dbReference type="GO" id="GO:0033539">
    <property type="term" value="P:fatty acid beta-oxidation using acyl-CoA dehydrogenase"/>
    <property type="evidence" value="ECO:0000315"/>
    <property type="project" value="EcoCyc"/>
</dbReference>
<dbReference type="GO" id="GO:0009062">
    <property type="term" value="P:fatty acid catabolic process"/>
    <property type="evidence" value="ECO:0000315"/>
    <property type="project" value="EcoCyc"/>
</dbReference>
<dbReference type="FunFam" id="1.10.540.10:FF:000004">
    <property type="entry name" value="Acyl-CoA dehydrogenase"/>
    <property type="match status" value="1"/>
</dbReference>
<dbReference type="FunFam" id="1.20.140.10:FF:000009">
    <property type="entry name" value="Acyl-CoA dehydrogenase"/>
    <property type="match status" value="1"/>
</dbReference>
<dbReference type="FunFam" id="2.40.110.10:FF:000010">
    <property type="entry name" value="Acyl-CoA dehydrogenase"/>
    <property type="match status" value="1"/>
</dbReference>
<dbReference type="Gene3D" id="1.10.540.10">
    <property type="entry name" value="Acyl-CoA dehydrogenase/oxidase, N-terminal domain"/>
    <property type="match status" value="1"/>
</dbReference>
<dbReference type="Gene3D" id="2.40.110.10">
    <property type="entry name" value="Butyryl-CoA Dehydrogenase, subunit A, domain 2"/>
    <property type="match status" value="1"/>
</dbReference>
<dbReference type="Gene3D" id="1.20.140.10">
    <property type="entry name" value="Butyryl-CoA Dehydrogenase, subunit A, domain 3"/>
    <property type="match status" value="1"/>
</dbReference>
<dbReference type="InterPro" id="IPR050741">
    <property type="entry name" value="Acyl-CoA_dehydrogenase"/>
</dbReference>
<dbReference type="InterPro" id="IPR006091">
    <property type="entry name" value="Acyl-CoA_Oxase/DH_mid-dom"/>
</dbReference>
<dbReference type="InterPro" id="IPR046373">
    <property type="entry name" value="Acyl-CoA_Oxase/DH_mid-dom_sf"/>
</dbReference>
<dbReference type="InterPro" id="IPR036250">
    <property type="entry name" value="AcylCo_DH-like_C"/>
</dbReference>
<dbReference type="InterPro" id="IPR009075">
    <property type="entry name" value="AcylCo_DH/oxidase_C"/>
</dbReference>
<dbReference type="InterPro" id="IPR013786">
    <property type="entry name" value="AcylCoA_DH/ox_N"/>
</dbReference>
<dbReference type="InterPro" id="IPR037069">
    <property type="entry name" value="AcylCoA_DH/ox_N_sf"/>
</dbReference>
<dbReference type="InterPro" id="IPR009100">
    <property type="entry name" value="AcylCoA_DH/oxidase_NM_dom_sf"/>
</dbReference>
<dbReference type="InterPro" id="IPR047634">
    <property type="entry name" value="FadE"/>
</dbReference>
<dbReference type="InterPro" id="IPR015396">
    <property type="entry name" value="FadE_C"/>
</dbReference>
<dbReference type="NCBIfam" id="NF038187">
    <property type="entry name" value="FadE_coli"/>
    <property type="match status" value="1"/>
</dbReference>
<dbReference type="NCBIfam" id="NF007000">
    <property type="entry name" value="PRK09463.1"/>
    <property type="match status" value="1"/>
</dbReference>
<dbReference type="NCBIfam" id="NF009586">
    <property type="entry name" value="PRK13026.1"/>
    <property type="match status" value="1"/>
</dbReference>
<dbReference type="PANTHER" id="PTHR48083:SF18">
    <property type="entry name" value="ACYL-COENZYME A DEHYDROGENASE"/>
    <property type="match status" value="1"/>
</dbReference>
<dbReference type="PANTHER" id="PTHR48083">
    <property type="entry name" value="MEDIUM-CHAIN SPECIFIC ACYL-COA DEHYDROGENASE, MITOCHONDRIAL-RELATED"/>
    <property type="match status" value="1"/>
</dbReference>
<dbReference type="Pfam" id="PF09317">
    <property type="entry name" value="ACDH_C"/>
    <property type="match status" value="1"/>
</dbReference>
<dbReference type="Pfam" id="PF00441">
    <property type="entry name" value="Acyl-CoA_dh_1"/>
    <property type="match status" value="1"/>
</dbReference>
<dbReference type="Pfam" id="PF02770">
    <property type="entry name" value="Acyl-CoA_dh_M"/>
    <property type="match status" value="1"/>
</dbReference>
<dbReference type="Pfam" id="PF02771">
    <property type="entry name" value="Acyl-CoA_dh_N"/>
    <property type="match status" value="1"/>
</dbReference>
<dbReference type="SUPFAM" id="SSF47203">
    <property type="entry name" value="Acyl-CoA dehydrogenase C-terminal domain-like"/>
    <property type="match status" value="1"/>
</dbReference>
<dbReference type="SUPFAM" id="SSF56645">
    <property type="entry name" value="Acyl-CoA dehydrogenase NM domain-like"/>
    <property type="match status" value="1"/>
</dbReference>
<sequence length="814" mass="89224">MMILSILATVVLLGALFYHRVSLFISSLILLAWTAALGVAGLWSAWVLVPLAIILVPFNFAPMRKSMISAPVFRGFRKVMPPMSRTEKEAIDAGTTWWEGDLFQGKPDWKKLHNYPQPRLTAEEQAFLDGPVEEACRMANDFQITHELADLPPELWAYLKEHRFFAMIIKKEYGGLEFSAYAQSRVLQKLSGVSGILAITVGVPNSLGPGELLQHYGTDEQKDHYLPRLARGQEIPCFALTSPEAGSDAGAIPDTGIVCMGEWQGQQVLGMRLTWNKRYITLAPIATVLGLAFKLSDPEKLLGGAEDLGITCALIPTTTPGVEIGRRHFPLNVPFQNGPTRGKDVFVPIDYIIGGPKMAGQGWRMLVECLSVGRGITLPSNSTGGVKSVALATGAYAHIRRQFKISIGKMEGIEEPLARIAGNAYVMDAAASLITYGIMLGEKPAVLSAIVKYHCTHRGQQSIIDAMDITGGKGIMLGQSNFLARAYQGAPIAITVEGANILTRSMMIFGQGAIRCHPYVLEEMEAAKNNDVNAFDKLLFKHIGHVGSNKVRSFWLGLTRGLTSSTPTGDATKRYYQHLNRLSANLALLSDVSMAVLGGSLKRRERISARLGDILSQLYLASAVLKRYDDEGRNEADLPLVHWGVQDALYQAEQAMDDLLQNFPNRVVAGLLNVVIFPTGRHYLAPSDKLDHKVAKILQVPNATRSRIGRGQYLTPSEHNPVGLLEEALVDVIAADPIHQRICKELGKNLPFTRLDELAHNALVKGLIDKDEAAILVKAEESRLRSINVDDFDPEELATKPVKLPEKVRKVEAA</sequence>
<reference key="1">
    <citation type="submission" date="1996-02" db="EMBL/GenBank/DDBJ databases">
        <title>Systematic sequencing of the Escherichia coli genome: analysis of the 4.0 - 6.0 min (189,987 - 281,416bp) region.</title>
        <authorList>
            <person name="Takemoto K."/>
            <person name="Mori H."/>
            <person name="Murayama N."/>
            <person name="Kataoka K."/>
            <person name="Yano M."/>
            <person name="Itoh T."/>
            <person name="Yamamoto Y."/>
            <person name="Inokuchi H."/>
            <person name="Miki T."/>
            <person name="Hatada E."/>
            <person name="Fukuda R."/>
            <person name="Ichihara S."/>
            <person name="Mizuno T."/>
            <person name="Makino K."/>
            <person name="Nakata A."/>
            <person name="Yura T."/>
            <person name="Sampei G."/>
            <person name="Mizobuchi K."/>
        </authorList>
    </citation>
    <scope>NUCLEOTIDE SEQUENCE [LARGE SCALE GENOMIC DNA]</scope>
    <source>
        <strain>K12 / W3110 / ATCC 27325 / DSM 5911</strain>
    </source>
</reference>
<reference key="2">
    <citation type="submission" date="1997-01" db="EMBL/GenBank/DDBJ databases">
        <title>Sequence of minutes 4-25 of Escherichia coli.</title>
        <authorList>
            <person name="Chung E."/>
            <person name="Allen E."/>
            <person name="Araujo R."/>
            <person name="Aparicio A.M."/>
            <person name="Davis K."/>
            <person name="Duncan M."/>
            <person name="Federspiel N."/>
            <person name="Hyman R."/>
            <person name="Kalman S."/>
            <person name="Komp C."/>
            <person name="Kurdi O."/>
            <person name="Lew H."/>
            <person name="Lin D."/>
            <person name="Namath A."/>
            <person name="Oefner P."/>
            <person name="Roberts D."/>
            <person name="Schramm S."/>
            <person name="Davis R.W."/>
        </authorList>
    </citation>
    <scope>NUCLEOTIDE SEQUENCE [LARGE SCALE GENOMIC DNA]</scope>
    <source>
        <strain>K12 / MG1655 / ATCC 47076</strain>
    </source>
</reference>
<reference key="3">
    <citation type="journal article" date="1997" name="Science">
        <title>The complete genome sequence of Escherichia coli K-12.</title>
        <authorList>
            <person name="Blattner F.R."/>
            <person name="Plunkett G. III"/>
            <person name="Bloch C.A."/>
            <person name="Perna N.T."/>
            <person name="Burland V."/>
            <person name="Riley M."/>
            <person name="Collado-Vides J."/>
            <person name="Glasner J.D."/>
            <person name="Rode C.K."/>
            <person name="Mayhew G.F."/>
            <person name="Gregor J."/>
            <person name="Davis N.W."/>
            <person name="Kirkpatrick H.A."/>
            <person name="Goeden M.A."/>
            <person name="Rose D.J."/>
            <person name="Mau B."/>
            <person name="Shao Y."/>
        </authorList>
    </citation>
    <scope>NUCLEOTIDE SEQUENCE [LARGE SCALE GENOMIC DNA]</scope>
    <source>
        <strain>K12 / MG1655 / ATCC 47076</strain>
    </source>
</reference>
<reference key="4">
    <citation type="journal article" date="2006" name="Mol. Syst. Biol.">
        <title>Highly accurate genome sequences of Escherichia coli K-12 strains MG1655 and W3110.</title>
        <authorList>
            <person name="Hayashi K."/>
            <person name="Morooka N."/>
            <person name="Yamamoto Y."/>
            <person name="Fujita K."/>
            <person name="Isono K."/>
            <person name="Choi S."/>
            <person name="Ohtsubo E."/>
            <person name="Baba T."/>
            <person name="Wanner B.L."/>
            <person name="Mori H."/>
            <person name="Horiuchi T."/>
        </authorList>
    </citation>
    <scope>NUCLEOTIDE SEQUENCE [LARGE SCALE GENOMIC DNA]</scope>
    <source>
        <strain>K12 / W3110 / ATCC 27325 / DSM 5911</strain>
    </source>
</reference>
<reference key="5">
    <citation type="journal article" date="1995" name="Mutat. Res.">
        <title>dinP, a new gene in Escherichia coli, whose product shows similarities to UmuC and its homologues.</title>
        <authorList>
            <person name="Ohmori H."/>
            <person name="Hatada E."/>
            <person name="Qiao Y."/>
            <person name="Tsuji M."/>
            <person name="Fukuda R."/>
        </authorList>
    </citation>
    <scope>NUCLEOTIDE SEQUENCE [GENOMIC DNA] OF 1-315</scope>
    <source>
        <strain>K12 / W3110 / ATCC 27325 / DSM 5911</strain>
    </source>
</reference>
<reference key="6">
    <citation type="journal article" date="2002" name="J. Bacteriol.">
        <title>The enigmatic Escherichia coli fadE gene is yafH.</title>
        <authorList>
            <person name="Campbell J.W."/>
            <person name="Cronan J.E. Jr."/>
        </authorList>
    </citation>
    <scope>FUNCTION</scope>
    <scope>PATHWAY</scope>
    <scope>INDUCTION</scope>
    <scope>DISRUPTION PHENOTYPE</scope>
</reference>
<name>FADE_ECOLI</name>
<organism>
    <name type="scientific">Escherichia coli (strain K12)</name>
    <dbReference type="NCBI Taxonomy" id="83333"/>
    <lineage>
        <taxon>Bacteria</taxon>
        <taxon>Pseudomonadati</taxon>
        <taxon>Pseudomonadota</taxon>
        <taxon>Gammaproteobacteria</taxon>
        <taxon>Enterobacterales</taxon>
        <taxon>Enterobacteriaceae</taxon>
        <taxon>Escherichia</taxon>
    </lineage>
</organism>
<comment type="function">
    <text evidence="2">Catalyzes the dehydrogenation of acyl-coenzymes A (acyl-CoAs) to 2-enoyl-CoAs, the first step of the beta-oxidation cycle of fatty acid degradation. Is required for E.coli to utilize dodecanoate or oleate as the sole carbon and energy source for growth.</text>
</comment>
<comment type="catalytic activity">
    <reaction evidence="5">
        <text>a medium-chain 2,3-saturated fatty acyl-CoA + oxidized [electron-transfer flavoprotein] + H(+) = a medium-chain (2E)-enoyl-CoA + reduced [electron-transfer flavoprotein]</text>
        <dbReference type="Rhea" id="RHEA:14477"/>
        <dbReference type="Rhea" id="RHEA-COMP:10685"/>
        <dbReference type="Rhea" id="RHEA-COMP:10686"/>
        <dbReference type="ChEBI" id="CHEBI:15378"/>
        <dbReference type="ChEBI" id="CHEBI:57692"/>
        <dbReference type="ChEBI" id="CHEBI:58307"/>
        <dbReference type="ChEBI" id="CHEBI:83723"/>
        <dbReference type="ChEBI" id="CHEBI:83726"/>
        <dbReference type="EC" id="1.3.8.7"/>
    </reaction>
</comment>
<comment type="catalytic activity">
    <reaction evidence="5">
        <text>a long-chain 2,3-saturated fatty acyl-CoA + oxidized [electron-transfer flavoprotein] + H(+) = a long-chain (2E)-enoyl-CoA + reduced [electron-transfer flavoprotein]</text>
        <dbReference type="Rhea" id="RHEA:17721"/>
        <dbReference type="Rhea" id="RHEA-COMP:10685"/>
        <dbReference type="Rhea" id="RHEA-COMP:10686"/>
        <dbReference type="ChEBI" id="CHEBI:15378"/>
        <dbReference type="ChEBI" id="CHEBI:57692"/>
        <dbReference type="ChEBI" id="CHEBI:58307"/>
        <dbReference type="ChEBI" id="CHEBI:83721"/>
        <dbReference type="ChEBI" id="CHEBI:83727"/>
        <dbReference type="EC" id="1.3.8.8"/>
    </reaction>
</comment>
<comment type="cofactor">
    <cofactor evidence="1">
        <name>FAD</name>
        <dbReference type="ChEBI" id="CHEBI:57692"/>
    </cofactor>
</comment>
<comment type="pathway">
    <text evidence="2">Lipid metabolism; fatty acid beta-oxidation.</text>
</comment>
<comment type="induction">
    <text evidence="2">Transcription of fadE is negatively regulated by FadR. Induced in the presence of fatty acids, in a FadR-dependent manner.</text>
</comment>
<comment type="disruption phenotype">
    <text evidence="2">Cells lacking this gene are unable to grow on octanoate, decanoate, dodecanoate, or oleate as the sole carbon and energy source, but grow well on acetate, while the wild-type strain can grow on acetate, dodecanoate, and oleate.</text>
</comment>
<comment type="similarity">
    <text evidence="4">Belongs to the acyl-CoA dehydrogenase family.</text>
</comment>
<comment type="caution">
    <text evidence="4">Was originally named fadF.</text>
</comment>
<comment type="sequence caution" evidence="4">
    <conflict type="erroneous initiation">
        <sequence resource="EMBL-CDS" id="BAA07583"/>
    </conflict>
    <text>Truncated N-terminus.</text>
</comment>